<protein>
    <recommendedName>
        <fullName evidence="1">ATP synthase subunit alpha</fullName>
        <ecNumber evidence="1">7.1.2.2</ecNumber>
    </recommendedName>
    <alternativeName>
        <fullName evidence="1">ATP synthase F1 sector subunit alpha</fullName>
    </alternativeName>
    <alternativeName>
        <fullName evidence="1">F-ATPase subunit alpha</fullName>
    </alternativeName>
</protein>
<comment type="function">
    <text evidence="1">Produces ATP from ADP in the presence of a proton gradient across the membrane. The alpha chain is a regulatory subunit.</text>
</comment>
<comment type="catalytic activity">
    <reaction evidence="1">
        <text>ATP + H2O + 4 H(+)(in) = ADP + phosphate + 5 H(+)(out)</text>
        <dbReference type="Rhea" id="RHEA:57720"/>
        <dbReference type="ChEBI" id="CHEBI:15377"/>
        <dbReference type="ChEBI" id="CHEBI:15378"/>
        <dbReference type="ChEBI" id="CHEBI:30616"/>
        <dbReference type="ChEBI" id="CHEBI:43474"/>
        <dbReference type="ChEBI" id="CHEBI:456216"/>
        <dbReference type="EC" id="7.1.2.2"/>
    </reaction>
</comment>
<comment type="subunit">
    <text evidence="1">F-type ATPases have 2 components, CF(1) - the catalytic core - and CF(0) - the membrane proton channel. CF(1) has five subunits: alpha(3), beta(3), gamma(1), delta(1), epsilon(1). CF(0) has three main subunits: a(1), b(2) and c(9-12). The alpha and beta chains form an alternating ring which encloses part of the gamma chain. CF(1) is attached to CF(0) by a central stalk formed by the gamma and epsilon chains, while a peripheral stalk is formed by the delta and b chains.</text>
</comment>
<comment type="subcellular location">
    <subcellularLocation>
        <location evidence="1">Cell inner membrane</location>
        <topology evidence="1">Peripheral membrane protein</topology>
    </subcellularLocation>
</comment>
<comment type="similarity">
    <text evidence="1">Belongs to the ATPase alpha/beta chains family.</text>
</comment>
<sequence>MQLNSTEISELIKQRIAQFNVVSEAHNEGTIVSVSDGVIRIHGLADCMQGEMISLPGNRYAIALNLERDSVGAVVMGPYADLAEGMKVKCTGRILEVPVGRGLLGRVVNTLGAPIDGKGPLDHDGFSAVEAIAPGVIERQSVDQPVQTGYKAVDSMIPIGRGQRELIIGDRQTGKTALAIDAIINQRDSGIKCIYVAIGQKASTISNVVRKLEEHGALANTIVVVATASESAALQYLAPYAGCAMGEYFRDRGEDALIIYDDLSKQAVAYRQISLLLRRPPGREAFPGDVFYLHSRLLERAARVNAEYVEAFTKGEVKGKTGSLTALPIIETQAGDVSAFVPTNVISITDGQIFLETNLFNAGIRPAVNPGISVSRVGGAAQTKIMKKLSGGIRTALAQYRELAAFSQFASDLDDATRKQLDHGQKVTELLKQKQYAPMSVAQQSLVLFAAERGYLADVELSKIGSFEAALLAYVDRDHAPLMQEINQTGGYNDEIEGKLKGILDSFKATQSW</sequence>
<evidence type="ECO:0000255" key="1">
    <source>
        <dbReference type="HAMAP-Rule" id="MF_01346"/>
    </source>
</evidence>
<dbReference type="EC" id="7.1.2.2" evidence="1"/>
<dbReference type="EMBL" id="CP000946">
    <property type="protein sequence ID" value="ACA79856.1"/>
    <property type="molecule type" value="Genomic_DNA"/>
</dbReference>
<dbReference type="RefSeq" id="WP_001176745.1">
    <property type="nucleotide sequence ID" value="NZ_MTFT01000013.1"/>
</dbReference>
<dbReference type="SMR" id="B1IX04"/>
<dbReference type="GeneID" id="93778233"/>
<dbReference type="KEGG" id="ecl:EcolC_4260"/>
<dbReference type="HOGENOM" id="CLU_010091_2_1_6"/>
<dbReference type="GO" id="GO:0005886">
    <property type="term" value="C:plasma membrane"/>
    <property type="evidence" value="ECO:0007669"/>
    <property type="project" value="UniProtKB-SubCell"/>
</dbReference>
<dbReference type="GO" id="GO:0045259">
    <property type="term" value="C:proton-transporting ATP synthase complex"/>
    <property type="evidence" value="ECO:0007669"/>
    <property type="project" value="UniProtKB-KW"/>
</dbReference>
<dbReference type="GO" id="GO:0043531">
    <property type="term" value="F:ADP binding"/>
    <property type="evidence" value="ECO:0007669"/>
    <property type="project" value="TreeGrafter"/>
</dbReference>
<dbReference type="GO" id="GO:0005524">
    <property type="term" value="F:ATP binding"/>
    <property type="evidence" value="ECO:0007669"/>
    <property type="project" value="UniProtKB-UniRule"/>
</dbReference>
<dbReference type="GO" id="GO:0046933">
    <property type="term" value="F:proton-transporting ATP synthase activity, rotational mechanism"/>
    <property type="evidence" value="ECO:0007669"/>
    <property type="project" value="UniProtKB-UniRule"/>
</dbReference>
<dbReference type="CDD" id="cd18113">
    <property type="entry name" value="ATP-synt_F1_alpha_C"/>
    <property type="match status" value="1"/>
</dbReference>
<dbReference type="CDD" id="cd18116">
    <property type="entry name" value="ATP-synt_F1_alpha_N"/>
    <property type="match status" value="1"/>
</dbReference>
<dbReference type="CDD" id="cd01132">
    <property type="entry name" value="F1-ATPase_alpha_CD"/>
    <property type="match status" value="1"/>
</dbReference>
<dbReference type="FunFam" id="1.20.150.20:FF:000001">
    <property type="entry name" value="ATP synthase subunit alpha"/>
    <property type="match status" value="1"/>
</dbReference>
<dbReference type="FunFam" id="2.40.30.20:FF:000001">
    <property type="entry name" value="ATP synthase subunit alpha"/>
    <property type="match status" value="1"/>
</dbReference>
<dbReference type="FunFam" id="3.40.50.300:FF:000002">
    <property type="entry name" value="ATP synthase subunit alpha"/>
    <property type="match status" value="1"/>
</dbReference>
<dbReference type="Gene3D" id="2.40.30.20">
    <property type="match status" value="1"/>
</dbReference>
<dbReference type="Gene3D" id="1.20.150.20">
    <property type="entry name" value="ATP synthase alpha/beta chain, C-terminal domain"/>
    <property type="match status" value="1"/>
</dbReference>
<dbReference type="Gene3D" id="3.40.50.300">
    <property type="entry name" value="P-loop containing nucleotide triphosphate hydrolases"/>
    <property type="match status" value="1"/>
</dbReference>
<dbReference type="HAMAP" id="MF_01346">
    <property type="entry name" value="ATP_synth_alpha_bact"/>
    <property type="match status" value="1"/>
</dbReference>
<dbReference type="InterPro" id="IPR023366">
    <property type="entry name" value="ATP_synth_asu-like_sf"/>
</dbReference>
<dbReference type="InterPro" id="IPR000793">
    <property type="entry name" value="ATP_synth_asu_C"/>
</dbReference>
<dbReference type="InterPro" id="IPR038376">
    <property type="entry name" value="ATP_synth_asu_C_sf"/>
</dbReference>
<dbReference type="InterPro" id="IPR033732">
    <property type="entry name" value="ATP_synth_F1_a_nt-bd_dom"/>
</dbReference>
<dbReference type="InterPro" id="IPR005294">
    <property type="entry name" value="ATP_synth_F1_asu"/>
</dbReference>
<dbReference type="InterPro" id="IPR020003">
    <property type="entry name" value="ATPase_a/bsu_AS"/>
</dbReference>
<dbReference type="InterPro" id="IPR004100">
    <property type="entry name" value="ATPase_F1/V1/A1_a/bsu_N"/>
</dbReference>
<dbReference type="InterPro" id="IPR036121">
    <property type="entry name" value="ATPase_F1/V1/A1_a/bsu_N_sf"/>
</dbReference>
<dbReference type="InterPro" id="IPR000194">
    <property type="entry name" value="ATPase_F1/V1/A1_a/bsu_nucl-bd"/>
</dbReference>
<dbReference type="InterPro" id="IPR027417">
    <property type="entry name" value="P-loop_NTPase"/>
</dbReference>
<dbReference type="NCBIfam" id="TIGR00962">
    <property type="entry name" value="atpA"/>
    <property type="match status" value="1"/>
</dbReference>
<dbReference type="NCBIfam" id="NF009884">
    <property type="entry name" value="PRK13343.1"/>
    <property type="match status" value="1"/>
</dbReference>
<dbReference type="PANTHER" id="PTHR48082">
    <property type="entry name" value="ATP SYNTHASE SUBUNIT ALPHA, MITOCHONDRIAL"/>
    <property type="match status" value="1"/>
</dbReference>
<dbReference type="PANTHER" id="PTHR48082:SF2">
    <property type="entry name" value="ATP SYNTHASE SUBUNIT ALPHA, MITOCHONDRIAL"/>
    <property type="match status" value="1"/>
</dbReference>
<dbReference type="Pfam" id="PF00006">
    <property type="entry name" value="ATP-synt_ab"/>
    <property type="match status" value="1"/>
</dbReference>
<dbReference type="Pfam" id="PF00306">
    <property type="entry name" value="ATP-synt_ab_C"/>
    <property type="match status" value="1"/>
</dbReference>
<dbReference type="Pfam" id="PF02874">
    <property type="entry name" value="ATP-synt_ab_N"/>
    <property type="match status" value="1"/>
</dbReference>
<dbReference type="SUPFAM" id="SSF47917">
    <property type="entry name" value="C-terminal domain of alpha and beta subunits of F1 ATP synthase"/>
    <property type="match status" value="1"/>
</dbReference>
<dbReference type="SUPFAM" id="SSF50615">
    <property type="entry name" value="N-terminal domain of alpha and beta subunits of F1 ATP synthase"/>
    <property type="match status" value="1"/>
</dbReference>
<dbReference type="SUPFAM" id="SSF52540">
    <property type="entry name" value="P-loop containing nucleoside triphosphate hydrolases"/>
    <property type="match status" value="1"/>
</dbReference>
<dbReference type="PROSITE" id="PS00152">
    <property type="entry name" value="ATPASE_ALPHA_BETA"/>
    <property type="match status" value="1"/>
</dbReference>
<name>ATPA_ECOLC</name>
<accession>B1IX04</accession>
<keyword id="KW-0066">ATP synthesis</keyword>
<keyword id="KW-0067">ATP-binding</keyword>
<keyword id="KW-0997">Cell inner membrane</keyword>
<keyword id="KW-1003">Cell membrane</keyword>
<keyword id="KW-0139">CF(1)</keyword>
<keyword id="KW-0375">Hydrogen ion transport</keyword>
<keyword id="KW-0406">Ion transport</keyword>
<keyword id="KW-0472">Membrane</keyword>
<keyword id="KW-0547">Nucleotide-binding</keyword>
<keyword id="KW-1278">Translocase</keyword>
<keyword id="KW-0813">Transport</keyword>
<gene>
    <name evidence="1" type="primary">atpA</name>
    <name type="ordered locus">EcolC_4260</name>
</gene>
<reference key="1">
    <citation type="submission" date="2008-02" db="EMBL/GenBank/DDBJ databases">
        <title>Complete sequence of Escherichia coli C str. ATCC 8739.</title>
        <authorList>
            <person name="Copeland A."/>
            <person name="Lucas S."/>
            <person name="Lapidus A."/>
            <person name="Glavina del Rio T."/>
            <person name="Dalin E."/>
            <person name="Tice H."/>
            <person name="Bruce D."/>
            <person name="Goodwin L."/>
            <person name="Pitluck S."/>
            <person name="Kiss H."/>
            <person name="Brettin T."/>
            <person name="Detter J.C."/>
            <person name="Han C."/>
            <person name="Kuske C.R."/>
            <person name="Schmutz J."/>
            <person name="Larimer F."/>
            <person name="Land M."/>
            <person name="Hauser L."/>
            <person name="Kyrpides N."/>
            <person name="Mikhailova N."/>
            <person name="Ingram L."/>
            <person name="Richardson P."/>
        </authorList>
    </citation>
    <scope>NUCLEOTIDE SEQUENCE [LARGE SCALE GENOMIC DNA]</scope>
    <source>
        <strain>ATCC 8739 / DSM 1576 / NBRC 3972 / NCIMB 8545 / WDCM 00012 / Crooks</strain>
    </source>
</reference>
<organism>
    <name type="scientific">Escherichia coli (strain ATCC 8739 / DSM 1576 / NBRC 3972 / NCIMB 8545 / WDCM 00012 / Crooks)</name>
    <dbReference type="NCBI Taxonomy" id="481805"/>
    <lineage>
        <taxon>Bacteria</taxon>
        <taxon>Pseudomonadati</taxon>
        <taxon>Pseudomonadota</taxon>
        <taxon>Gammaproteobacteria</taxon>
        <taxon>Enterobacterales</taxon>
        <taxon>Enterobacteriaceae</taxon>
        <taxon>Escherichia</taxon>
    </lineage>
</organism>
<proteinExistence type="inferred from homology"/>
<feature type="chain" id="PRO_1000086877" description="ATP synthase subunit alpha">
    <location>
        <begin position="1"/>
        <end position="513"/>
    </location>
</feature>
<feature type="binding site" evidence="1">
    <location>
        <begin position="169"/>
        <end position="176"/>
    </location>
    <ligand>
        <name>ATP</name>
        <dbReference type="ChEBI" id="CHEBI:30616"/>
    </ligand>
</feature>
<feature type="site" description="Required for activity" evidence="1">
    <location>
        <position position="373"/>
    </location>
</feature>